<proteinExistence type="inferred from homology"/>
<name>TPMT_XANE5</name>
<keyword id="KW-0963">Cytoplasm</keyword>
<keyword id="KW-0489">Methyltransferase</keyword>
<keyword id="KW-0949">S-adenosyl-L-methionine</keyword>
<keyword id="KW-0808">Transferase</keyword>
<evidence type="ECO:0000255" key="1">
    <source>
        <dbReference type="HAMAP-Rule" id="MF_00812"/>
    </source>
</evidence>
<dbReference type="EC" id="2.1.1.67" evidence="1"/>
<dbReference type="EMBL" id="AM039952">
    <property type="protein sequence ID" value="CAJ23127.1"/>
    <property type="molecule type" value="Genomic_DNA"/>
</dbReference>
<dbReference type="RefSeq" id="WP_011346909.1">
    <property type="nucleotide sequence ID" value="NZ_CP017190.1"/>
</dbReference>
<dbReference type="SMR" id="Q3BVI6"/>
<dbReference type="STRING" id="456327.BJD11_15165"/>
<dbReference type="KEGG" id="xcv:XCV1496"/>
<dbReference type="eggNOG" id="COG2265">
    <property type="taxonomic scope" value="Bacteria"/>
</dbReference>
<dbReference type="HOGENOM" id="CLU_085515_1_0_6"/>
<dbReference type="Proteomes" id="UP000007069">
    <property type="component" value="Chromosome"/>
</dbReference>
<dbReference type="GO" id="GO:0005737">
    <property type="term" value="C:cytoplasm"/>
    <property type="evidence" value="ECO:0007669"/>
    <property type="project" value="UniProtKB-SubCell"/>
</dbReference>
<dbReference type="GO" id="GO:0008119">
    <property type="term" value="F:thiopurine S-methyltransferase activity"/>
    <property type="evidence" value="ECO:0007669"/>
    <property type="project" value="UniProtKB-UniRule"/>
</dbReference>
<dbReference type="GO" id="GO:0032259">
    <property type="term" value="P:methylation"/>
    <property type="evidence" value="ECO:0007669"/>
    <property type="project" value="UniProtKB-KW"/>
</dbReference>
<dbReference type="GO" id="GO:0010038">
    <property type="term" value="P:response to metal ion"/>
    <property type="evidence" value="ECO:0007669"/>
    <property type="project" value="InterPro"/>
</dbReference>
<dbReference type="FunFam" id="3.40.50.150:FF:000101">
    <property type="entry name" value="Thiopurine S-methyltransferase"/>
    <property type="match status" value="1"/>
</dbReference>
<dbReference type="Gene3D" id="3.40.50.150">
    <property type="entry name" value="Vaccinia Virus protein VP39"/>
    <property type="match status" value="1"/>
</dbReference>
<dbReference type="HAMAP" id="MF_00812">
    <property type="entry name" value="Thiopur_methtran"/>
    <property type="match status" value="1"/>
</dbReference>
<dbReference type="InterPro" id="IPR029063">
    <property type="entry name" value="SAM-dependent_MTases_sf"/>
</dbReference>
<dbReference type="InterPro" id="IPR022474">
    <property type="entry name" value="Thiopur_S-MeTfrase_Se/Te_detox"/>
</dbReference>
<dbReference type="InterPro" id="IPR025835">
    <property type="entry name" value="Thiopurine_S-MeTrfase"/>
</dbReference>
<dbReference type="InterPro" id="IPR008854">
    <property type="entry name" value="TPMT"/>
</dbReference>
<dbReference type="NCBIfam" id="NF009732">
    <property type="entry name" value="PRK13255.1"/>
    <property type="match status" value="1"/>
</dbReference>
<dbReference type="NCBIfam" id="TIGR03840">
    <property type="entry name" value="TMPT_Se_Te"/>
    <property type="match status" value="1"/>
</dbReference>
<dbReference type="PANTHER" id="PTHR10259">
    <property type="entry name" value="THIOPURINE S-METHYLTRANSFERASE"/>
    <property type="match status" value="1"/>
</dbReference>
<dbReference type="PANTHER" id="PTHR10259:SF11">
    <property type="entry name" value="THIOPURINE S-METHYLTRANSFERASE"/>
    <property type="match status" value="1"/>
</dbReference>
<dbReference type="Pfam" id="PF05724">
    <property type="entry name" value="TPMT"/>
    <property type="match status" value="1"/>
</dbReference>
<dbReference type="PIRSF" id="PIRSF023956">
    <property type="entry name" value="Thiopurine_S-methyltransferase"/>
    <property type="match status" value="1"/>
</dbReference>
<dbReference type="SUPFAM" id="SSF53335">
    <property type="entry name" value="S-adenosyl-L-methionine-dependent methyltransferases"/>
    <property type="match status" value="1"/>
</dbReference>
<dbReference type="PROSITE" id="PS51585">
    <property type="entry name" value="SAM_MT_TPMT"/>
    <property type="match status" value="1"/>
</dbReference>
<comment type="catalytic activity">
    <reaction evidence="1">
        <text>S-adenosyl-L-methionine + a thiopurine = S-adenosyl-L-homocysteine + a thiopurine S-methylether.</text>
        <dbReference type="EC" id="2.1.1.67"/>
    </reaction>
</comment>
<comment type="subcellular location">
    <subcellularLocation>
        <location evidence="1">Cytoplasm</location>
    </subcellularLocation>
</comment>
<comment type="similarity">
    <text evidence="1">Belongs to the class I-like SAM-binding methyltransferase superfamily. TPMT family.</text>
</comment>
<feature type="chain" id="PRO_1000047228" description="Thiopurine S-methyltransferase">
    <location>
        <begin position="1"/>
        <end position="218"/>
    </location>
</feature>
<feature type="binding site" evidence="1">
    <location>
        <position position="10"/>
    </location>
    <ligand>
        <name>S-adenosyl-L-methionine</name>
        <dbReference type="ChEBI" id="CHEBI:59789"/>
    </ligand>
</feature>
<feature type="binding site" evidence="1">
    <location>
        <position position="45"/>
    </location>
    <ligand>
        <name>S-adenosyl-L-methionine</name>
        <dbReference type="ChEBI" id="CHEBI:59789"/>
    </ligand>
</feature>
<feature type="binding site" evidence="1">
    <location>
        <position position="66"/>
    </location>
    <ligand>
        <name>S-adenosyl-L-methionine</name>
        <dbReference type="ChEBI" id="CHEBI:59789"/>
    </ligand>
</feature>
<feature type="binding site" evidence="1">
    <location>
        <position position="123"/>
    </location>
    <ligand>
        <name>S-adenosyl-L-methionine</name>
        <dbReference type="ChEBI" id="CHEBI:59789"/>
    </ligand>
</feature>
<sequence length="218" mass="24334">MDTNFWLERWQLGHTGFHQQEVLPLLQKHWHALDLPKEARVLVPLCGKTLDMHWLAAQGHRVLGVELSPLAVTQFFDEAGLQPQRHSSAAGEHFIAGPIEIICGDAFALDASALADCTAVYDRAALVALPAELRQHYLQTVYAPLPTHCHGLLITLEYPQAEKAGPPFSVDATHVHALFDSAWQVDQLEHRDILDQEPRFRDEGVTGLSTAVYRLQGR</sequence>
<protein>
    <recommendedName>
        <fullName evidence="1">Thiopurine S-methyltransferase</fullName>
        <ecNumber evidence="1">2.1.1.67</ecNumber>
    </recommendedName>
    <alternativeName>
        <fullName evidence="1">Thiopurine methyltransferase</fullName>
    </alternativeName>
</protein>
<organism>
    <name type="scientific">Xanthomonas euvesicatoria pv. vesicatoria (strain 85-10)</name>
    <name type="common">Xanthomonas campestris pv. vesicatoria</name>
    <dbReference type="NCBI Taxonomy" id="316273"/>
    <lineage>
        <taxon>Bacteria</taxon>
        <taxon>Pseudomonadati</taxon>
        <taxon>Pseudomonadota</taxon>
        <taxon>Gammaproteobacteria</taxon>
        <taxon>Lysobacterales</taxon>
        <taxon>Lysobacteraceae</taxon>
        <taxon>Xanthomonas</taxon>
    </lineage>
</organism>
<accession>Q3BVI6</accession>
<gene>
    <name evidence="1" type="primary">tpm</name>
    <name type="ordered locus">XCV1496</name>
</gene>
<reference key="1">
    <citation type="journal article" date="2005" name="J. Bacteriol.">
        <title>Insights into genome plasticity and pathogenicity of the plant pathogenic Bacterium Xanthomonas campestris pv. vesicatoria revealed by the complete genome sequence.</title>
        <authorList>
            <person name="Thieme F."/>
            <person name="Koebnik R."/>
            <person name="Bekel T."/>
            <person name="Berger C."/>
            <person name="Boch J."/>
            <person name="Buettner D."/>
            <person name="Caldana C."/>
            <person name="Gaigalat L."/>
            <person name="Goesmann A."/>
            <person name="Kay S."/>
            <person name="Kirchner O."/>
            <person name="Lanz C."/>
            <person name="Linke B."/>
            <person name="McHardy A.C."/>
            <person name="Meyer F."/>
            <person name="Mittenhuber G."/>
            <person name="Nies D.H."/>
            <person name="Niesbach-Kloesgen U."/>
            <person name="Patschkowski T."/>
            <person name="Rueckert C."/>
            <person name="Rupp O."/>
            <person name="Schneiker S."/>
            <person name="Schuster S.C."/>
            <person name="Vorhoelter F.J."/>
            <person name="Weber E."/>
            <person name="Puehler A."/>
            <person name="Bonas U."/>
            <person name="Bartels D."/>
            <person name="Kaiser O."/>
        </authorList>
    </citation>
    <scope>NUCLEOTIDE SEQUENCE [LARGE SCALE GENOMIC DNA]</scope>
    <source>
        <strain>85-10</strain>
    </source>
</reference>